<accession>C4ZG66</accession>
<feature type="chain" id="PRO_1000215831" description="LL-diaminopimelate aminotransferase">
    <location>
        <begin position="1"/>
        <end position="404"/>
    </location>
</feature>
<feature type="binding site" evidence="1">
    <location>
        <position position="15"/>
    </location>
    <ligand>
        <name>substrate</name>
    </ligand>
</feature>
<feature type="binding site" evidence="1">
    <location>
        <position position="42"/>
    </location>
    <ligand>
        <name>substrate</name>
    </ligand>
</feature>
<feature type="binding site" evidence="1">
    <location>
        <position position="72"/>
    </location>
    <ligand>
        <name>pyridoxal 5'-phosphate</name>
        <dbReference type="ChEBI" id="CHEBI:597326"/>
    </ligand>
</feature>
<feature type="binding site" evidence="1">
    <location>
        <begin position="108"/>
        <end position="109"/>
    </location>
    <ligand>
        <name>pyridoxal 5'-phosphate</name>
        <dbReference type="ChEBI" id="CHEBI:597326"/>
    </ligand>
</feature>
<feature type="binding site" evidence="1">
    <location>
        <position position="109"/>
    </location>
    <ligand>
        <name>substrate</name>
    </ligand>
</feature>
<feature type="binding site" evidence="1">
    <location>
        <position position="132"/>
    </location>
    <ligand>
        <name>pyridoxal 5'-phosphate</name>
        <dbReference type="ChEBI" id="CHEBI:597326"/>
    </ligand>
</feature>
<feature type="binding site" evidence="1">
    <location>
        <position position="132"/>
    </location>
    <ligand>
        <name>substrate</name>
    </ligand>
</feature>
<feature type="binding site" evidence="1">
    <location>
        <position position="188"/>
    </location>
    <ligand>
        <name>pyridoxal 5'-phosphate</name>
        <dbReference type="ChEBI" id="CHEBI:597326"/>
    </ligand>
</feature>
<feature type="binding site" evidence="1">
    <location>
        <position position="188"/>
    </location>
    <ligand>
        <name>substrate</name>
    </ligand>
</feature>
<feature type="binding site" evidence="1">
    <location>
        <position position="219"/>
    </location>
    <ligand>
        <name>pyridoxal 5'-phosphate</name>
        <dbReference type="ChEBI" id="CHEBI:597326"/>
    </ligand>
</feature>
<feature type="binding site" evidence="1">
    <location>
        <begin position="247"/>
        <end position="249"/>
    </location>
    <ligand>
        <name>pyridoxal 5'-phosphate</name>
        <dbReference type="ChEBI" id="CHEBI:597326"/>
    </ligand>
</feature>
<feature type="binding site" evidence="1">
    <location>
        <position position="258"/>
    </location>
    <ligand>
        <name>pyridoxal 5'-phosphate</name>
        <dbReference type="ChEBI" id="CHEBI:597326"/>
    </ligand>
</feature>
<feature type="binding site" evidence="1">
    <location>
        <position position="288"/>
    </location>
    <ligand>
        <name>pyridoxal 5'-phosphate</name>
        <dbReference type="ChEBI" id="CHEBI:597326"/>
    </ligand>
</feature>
<feature type="binding site" evidence="1">
    <location>
        <position position="288"/>
    </location>
    <ligand>
        <name>substrate</name>
    </ligand>
</feature>
<feature type="binding site" evidence="1">
    <location>
        <position position="384"/>
    </location>
    <ligand>
        <name>substrate</name>
    </ligand>
</feature>
<feature type="modified residue" description="N6-(pyridoxal phosphate)lysine" evidence="1">
    <location>
        <position position="250"/>
    </location>
</feature>
<comment type="function">
    <text evidence="1">Involved in the synthesis of meso-diaminopimelate (m-DAP or DL-DAP), required for both lysine and peptidoglycan biosynthesis. Catalyzes the direct conversion of tetrahydrodipicolinate to LL-diaminopimelate.</text>
</comment>
<comment type="catalytic activity">
    <reaction evidence="1">
        <text>(2S,6S)-2,6-diaminopimelate + 2-oxoglutarate = (S)-2,3,4,5-tetrahydrodipicolinate + L-glutamate + H2O + H(+)</text>
        <dbReference type="Rhea" id="RHEA:23988"/>
        <dbReference type="ChEBI" id="CHEBI:15377"/>
        <dbReference type="ChEBI" id="CHEBI:15378"/>
        <dbReference type="ChEBI" id="CHEBI:16810"/>
        <dbReference type="ChEBI" id="CHEBI:16845"/>
        <dbReference type="ChEBI" id="CHEBI:29985"/>
        <dbReference type="ChEBI" id="CHEBI:57609"/>
        <dbReference type="EC" id="2.6.1.83"/>
    </reaction>
</comment>
<comment type="cofactor">
    <cofactor evidence="1">
        <name>pyridoxal 5'-phosphate</name>
        <dbReference type="ChEBI" id="CHEBI:597326"/>
    </cofactor>
</comment>
<comment type="pathway">
    <text evidence="1">Amino-acid biosynthesis; L-lysine biosynthesis via DAP pathway; LL-2,6-diaminopimelate from (S)-tetrahydrodipicolinate (aminotransferase route): step 1/1.</text>
</comment>
<comment type="subunit">
    <text evidence="1">Homodimer.</text>
</comment>
<comment type="similarity">
    <text evidence="1">Belongs to the class-I pyridoxal-phosphate-dependent aminotransferase family. LL-diaminopimelate aminotransferase subfamily.</text>
</comment>
<reference key="1">
    <citation type="journal article" date="2009" name="Proc. Natl. Acad. Sci. U.S.A.">
        <title>Characterizing a model human gut microbiota composed of members of its two dominant bacterial phyla.</title>
        <authorList>
            <person name="Mahowald M.A."/>
            <person name="Rey F.E."/>
            <person name="Seedorf H."/>
            <person name="Turnbaugh P.J."/>
            <person name="Fulton R.S."/>
            <person name="Wollam A."/>
            <person name="Shah N."/>
            <person name="Wang C."/>
            <person name="Magrini V."/>
            <person name="Wilson R.K."/>
            <person name="Cantarel B.L."/>
            <person name="Coutinho P.M."/>
            <person name="Henrissat B."/>
            <person name="Crock L.W."/>
            <person name="Russell A."/>
            <person name="Verberkmoes N.C."/>
            <person name="Hettich R.L."/>
            <person name="Gordon J.I."/>
        </authorList>
    </citation>
    <scope>NUCLEOTIDE SEQUENCE [LARGE SCALE GENOMIC DNA]</scope>
    <source>
        <strain>ATCC 33656 / DSM 3377 / JCM 17463 / KCTC 5835 / LMG 30912 / VPI 0990</strain>
    </source>
</reference>
<gene>
    <name evidence="1" type="primary">dapL</name>
    <name type="ordered locus">EUBREC_2541</name>
</gene>
<evidence type="ECO:0000255" key="1">
    <source>
        <dbReference type="HAMAP-Rule" id="MF_01642"/>
    </source>
</evidence>
<dbReference type="EC" id="2.6.1.83" evidence="1"/>
<dbReference type="EMBL" id="CP001107">
    <property type="protein sequence ID" value="ACR76272.1"/>
    <property type="molecule type" value="Genomic_DNA"/>
</dbReference>
<dbReference type="RefSeq" id="WP_012743361.1">
    <property type="nucleotide sequence ID" value="NC_012781.1"/>
</dbReference>
<dbReference type="SMR" id="C4ZG66"/>
<dbReference type="STRING" id="515619.EUBREC_2541"/>
<dbReference type="PaxDb" id="515619-EUBREC_2541"/>
<dbReference type="GeneID" id="86989282"/>
<dbReference type="KEGG" id="ere:EUBREC_2541"/>
<dbReference type="HOGENOM" id="CLU_051433_0_0_9"/>
<dbReference type="UniPathway" id="UPA00034">
    <property type="reaction ID" value="UER00466"/>
</dbReference>
<dbReference type="Proteomes" id="UP000001477">
    <property type="component" value="Chromosome"/>
</dbReference>
<dbReference type="GO" id="GO:0010285">
    <property type="term" value="F:L,L-diaminopimelate aminotransferase activity"/>
    <property type="evidence" value="ECO:0007669"/>
    <property type="project" value="UniProtKB-UniRule"/>
</dbReference>
<dbReference type="GO" id="GO:0030170">
    <property type="term" value="F:pyridoxal phosphate binding"/>
    <property type="evidence" value="ECO:0007669"/>
    <property type="project" value="UniProtKB-UniRule"/>
</dbReference>
<dbReference type="GO" id="GO:0033362">
    <property type="term" value="P:lysine biosynthetic process via diaminopimelate, diaminopimelate-aminotransferase pathway"/>
    <property type="evidence" value="ECO:0007669"/>
    <property type="project" value="UniProtKB-UniRule"/>
</dbReference>
<dbReference type="CDD" id="cd00609">
    <property type="entry name" value="AAT_like"/>
    <property type="match status" value="1"/>
</dbReference>
<dbReference type="FunFam" id="3.40.640.10:FF:000099">
    <property type="entry name" value="LL-diaminopimelate aminotransferase, chloroplastic"/>
    <property type="match status" value="1"/>
</dbReference>
<dbReference type="Gene3D" id="3.90.1150.10">
    <property type="entry name" value="Aspartate Aminotransferase, domain 1"/>
    <property type="match status" value="1"/>
</dbReference>
<dbReference type="Gene3D" id="3.40.640.10">
    <property type="entry name" value="Type I PLP-dependent aspartate aminotransferase-like (Major domain)"/>
    <property type="match status" value="1"/>
</dbReference>
<dbReference type="HAMAP" id="MF_01642">
    <property type="entry name" value="DapL_aminotrans_1"/>
    <property type="match status" value="1"/>
</dbReference>
<dbReference type="InterPro" id="IPR004839">
    <property type="entry name" value="Aminotransferase_I/II_large"/>
</dbReference>
<dbReference type="InterPro" id="IPR019942">
    <property type="entry name" value="DapL/ALD1"/>
</dbReference>
<dbReference type="InterPro" id="IPR015424">
    <property type="entry name" value="PyrdxlP-dep_Trfase"/>
</dbReference>
<dbReference type="InterPro" id="IPR015421">
    <property type="entry name" value="PyrdxlP-dep_Trfase_major"/>
</dbReference>
<dbReference type="InterPro" id="IPR015422">
    <property type="entry name" value="PyrdxlP-dep_Trfase_small"/>
</dbReference>
<dbReference type="NCBIfam" id="TIGR03542">
    <property type="entry name" value="DAPAT_plant"/>
    <property type="match status" value="1"/>
</dbReference>
<dbReference type="PANTHER" id="PTHR43144">
    <property type="entry name" value="AMINOTRANSFERASE"/>
    <property type="match status" value="1"/>
</dbReference>
<dbReference type="Pfam" id="PF00155">
    <property type="entry name" value="Aminotran_1_2"/>
    <property type="match status" value="1"/>
</dbReference>
<dbReference type="SUPFAM" id="SSF53383">
    <property type="entry name" value="PLP-dependent transferases"/>
    <property type="match status" value="1"/>
</dbReference>
<name>DAPAT_AGARV</name>
<sequence>MFQINDNFQKLPGSYLFSTIAKKVAAYQEANPDKEIIRLGIGDVTQPLAPAIIDALHKAVDEMGNAATFHGYAPDLGYEFLRKAISDNDYKARGCDISADEIFVSDGAKSDSANIQELFSANSRIAVTDPVYPVYVDSNVMAGRTGTYDAQTETWSNVIYMPSTADNGFVPELPKEVPDMIYLCLPNNPTGTTLKKEQLQVWVDYANKNGSVIIFDAAYEAYISEADVPHSIYECNGAKTCAIELRSFSKNAGFTGVRLGFTVVPKELKCGDVSLHAMWARRHGTKFNGAPYIVQRAGEAVYSDAGKAQLKDQVAYYMNNAKTIKTGLAEAGFTVYGGVNAPYIWLKTPDQMTSWEFFDYLLENANVVGTPGSGFGPSGEGYFRLTAFGNYENTVKALERIKAL</sequence>
<proteinExistence type="inferred from homology"/>
<protein>
    <recommendedName>
        <fullName evidence="1">LL-diaminopimelate aminotransferase</fullName>
        <shortName evidence="1">DAP-AT</shortName>
        <shortName evidence="1">DAP-aminotransferase</shortName>
        <shortName evidence="1">LL-DAP-aminotransferase</shortName>
        <ecNumber evidence="1">2.6.1.83</ecNumber>
    </recommendedName>
</protein>
<keyword id="KW-0032">Aminotransferase</keyword>
<keyword id="KW-0663">Pyridoxal phosphate</keyword>
<keyword id="KW-0808">Transferase</keyword>
<organism>
    <name type="scientific">Agathobacter rectalis (strain ATCC 33656 / DSM 3377 / JCM 17463 / KCTC 5835 / VPI 0990)</name>
    <name type="common">Eubacterium rectale</name>
    <dbReference type="NCBI Taxonomy" id="515619"/>
    <lineage>
        <taxon>Bacteria</taxon>
        <taxon>Bacillati</taxon>
        <taxon>Bacillota</taxon>
        <taxon>Clostridia</taxon>
        <taxon>Lachnospirales</taxon>
        <taxon>Lachnospiraceae</taxon>
        <taxon>Agathobacter</taxon>
    </lineage>
</organism>